<proteinExistence type="inferred from homology"/>
<name>AROC_STAA8</name>
<sequence length="388" mass="43047">MRYLTSGESHGPQLTVIVEGVPANIEIKVEDINKEMFKRQGGYGRGRRMQIEKDTVEIVSGVRNGYTLGSPITMVVTNDDFTHWRKIMGAAPISEEERENMKRTITKPRPGHADLVGGMKYNHRDLRNVLERSSARETAARVAVGALCKVLLQQLDIDIYSRVVEIGGIKDKDFYDSETFKANLDRNDVRVIDDSIAQAMRDKIDEAKNEGDSIGGVVQVVVENMPVGVGSYVHYDRKLDGKIAQGVVSINAFKGVSFGEGFKAAEKPGSEIQDEILYNSEIGYYRGSNHLGGLEGGMSNGMPIIVNGVMKPIPTLYKPLNSVDINTKEDFKATIERSDSCAVPAASIVCEHVVAFEIAKALLEEFQSNHIEQLKQQIIERRQLNIEF</sequence>
<evidence type="ECO:0000255" key="1">
    <source>
        <dbReference type="HAMAP-Rule" id="MF_00300"/>
    </source>
</evidence>
<organism>
    <name type="scientific">Staphylococcus aureus (strain NCTC 8325 / PS 47)</name>
    <dbReference type="NCBI Taxonomy" id="93061"/>
    <lineage>
        <taxon>Bacteria</taxon>
        <taxon>Bacillati</taxon>
        <taxon>Bacillota</taxon>
        <taxon>Bacilli</taxon>
        <taxon>Bacillales</taxon>
        <taxon>Staphylococcaceae</taxon>
        <taxon>Staphylococcus</taxon>
    </lineage>
</organism>
<protein>
    <recommendedName>
        <fullName evidence="1">Chorismate synthase</fullName>
        <shortName evidence="1">CS</shortName>
        <ecNumber evidence="1">4.2.3.5</ecNumber>
    </recommendedName>
    <alternativeName>
        <fullName evidence="1">5-enolpyruvylshikimate-3-phosphate phospholyase</fullName>
    </alternativeName>
</protein>
<keyword id="KW-0028">Amino-acid biosynthesis</keyword>
<keyword id="KW-0057">Aromatic amino acid biosynthesis</keyword>
<keyword id="KW-0274">FAD</keyword>
<keyword id="KW-0285">Flavoprotein</keyword>
<keyword id="KW-0288">FMN</keyword>
<keyword id="KW-0456">Lyase</keyword>
<keyword id="KW-0521">NADP</keyword>
<keyword id="KW-1185">Reference proteome</keyword>
<gene>
    <name evidence="1" type="primary">aroC</name>
    <name type="ordered locus">SAOUHSC_01483</name>
</gene>
<accession>Q2FYG9</accession>
<feature type="chain" id="PRO_0000256340" description="Chorismate synthase">
    <location>
        <begin position="1"/>
        <end position="388"/>
    </location>
</feature>
<feature type="binding site" evidence="1">
    <location>
        <position position="39"/>
    </location>
    <ligand>
        <name>NADP(+)</name>
        <dbReference type="ChEBI" id="CHEBI:58349"/>
    </ligand>
</feature>
<feature type="binding site" evidence="1">
    <location>
        <position position="45"/>
    </location>
    <ligand>
        <name>NADP(+)</name>
        <dbReference type="ChEBI" id="CHEBI:58349"/>
    </ligand>
</feature>
<feature type="binding site" evidence="1">
    <location>
        <begin position="132"/>
        <end position="134"/>
    </location>
    <ligand>
        <name>FMN</name>
        <dbReference type="ChEBI" id="CHEBI:58210"/>
    </ligand>
</feature>
<feature type="binding site" evidence="1">
    <location>
        <begin position="251"/>
        <end position="252"/>
    </location>
    <ligand>
        <name>FMN</name>
        <dbReference type="ChEBI" id="CHEBI:58210"/>
    </ligand>
</feature>
<feature type="binding site" evidence="1">
    <location>
        <position position="296"/>
    </location>
    <ligand>
        <name>FMN</name>
        <dbReference type="ChEBI" id="CHEBI:58210"/>
    </ligand>
</feature>
<feature type="binding site" evidence="1">
    <location>
        <begin position="311"/>
        <end position="315"/>
    </location>
    <ligand>
        <name>FMN</name>
        <dbReference type="ChEBI" id="CHEBI:58210"/>
    </ligand>
</feature>
<feature type="binding site" evidence="1">
    <location>
        <position position="337"/>
    </location>
    <ligand>
        <name>FMN</name>
        <dbReference type="ChEBI" id="CHEBI:58210"/>
    </ligand>
</feature>
<reference key="1">
    <citation type="book" date="2006" name="Gram positive pathogens, 2nd edition">
        <title>The Staphylococcus aureus NCTC 8325 genome.</title>
        <editorList>
            <person name="Fischetti V."/>
            <person name="Novick R."/>
            <person name="Ferretti J."/>
            <person name="Portnoy D."/>
            <person name="Rood J."/>
        </editorList>
        <authorList>
            <person name="Gillaspy A.F."/>
            <person name="Worrell V."/>
            <person name="Orvis J."/>
            <person name="Roe B.A."/>
            <person name="Dyer D.W."/>
            <person name="Iandolo J.J."/>
        </authorList>
    </citation>
    <scope>NUCLEOTIDE SEQUENCE [LARGE SCALE GENOMIC DNA]</scope>
    <source>
        <strain>NCTC 8325 / PS 47</strain>
    </source>
</reference>
<comment type="function">
    <text evidence="1">Catalyzes the anti-1,4-elimination of the C-3 phosphate and the C-6 proR hydrogen from 5-enolpyruvylshikimate-3-phosphate (EPSP) to yield chorismate, which is the branch point compound that serves as the starting substrate for the three terminal pathways of aromatic amino acid biosynthesis. This reaction introduces a second double bond into the aromatic ring system.</text>
</comment>
<comment type="catalytic activity">
    <reaction evidence="1">
        <text>5-O-(1-carboxyvinyl)-3-phosphoshikimate = chorismate + phosphate</text>
        <dbReference type="Rhea" id="RHEA:21020"/>
        <dbReference type="ChEBI" id="CHEBI:29748"/>
        <dbReference type="ChEBI" id="CHEBI:43474"/>
        <dbReference type="ChEBI" id="CHEBI:57701"/>
        <dbReference type="EC" id="4.2.3.5"/>
    </reaction>
</comment>
<comment type="cofactor">
    <cofactor evidence="1">
        <name>FMNH2</name>
        <dbReference type="ChEBI" id="CHEBI:57618"/>
    </cofactor>
    <text evidence="1">Reduced FMN (FMNH(2)).</text>
</comment>
<comment type="pathway">
    <text evidence="1">Metabolic intermediate biosynthesis; chorismate biosynthesis; chorismate from D-erythrose 4-phosphate and phosphoenolpyruvate: step 7/7.</text>
</comment>
<comment type="subunit">
    <text evidence="1">Homotetramer.</text>
</comment>
<comment type="similarity">
    <text evidence="1">Belongs to the chorismate synthase family.</text>
</comment>
<dbReference type="EC" id="4.2.3.5" evidence="1"/>
<dbReference type="EMBL" id="CP000253">
    <property type="protein sequence ID" value="ABD30568.1"/>
    <property type="molecule type" value="Genomic_DNA"/>
</dbReference>
<dbReference type="RefSeq" id="WP_001269929.1">
    <property type="nucleotide sequence ID" value="NZ_LS483365.1"/>
</dbReference>
<dbReference type="RefSeq" id="YP_500001.1">
    <property type="nucleotide sequence ID" value="NC_007795.1"/>
</dbReference>
<dbReference type="SMR" id="Q2FYG9"/>
<dbReference type="STRING" id="93061.SAOUHSC_01483"/>
<dbReference type="PaxDb" id="1280-SAXN108_1489"/>
<dbReference type="GeneID" id="3920238"/>
<dbReference type="KEGG" id="sao:SAOUHSC_01483"/>
<dbReference type="PATRIC" id="fig|93061.5.peg.1352"/>
<dbReference type="eggNOG" id="COG0082">
    <property type="taxonomic scope" value="Bacteria"/>
</dbReference>
<dbReference type="HOGENOM" id="CLU_034547_2_0_9"/>
<dbReference type="OrthoDB" id="9771806at2"/>
<dbReference type="UniPathway" id="UPA00053">
    <property type="reaction ID" value="UER00090"/>
</dbReference>
<dbReference type="PRO" id="PR:Q2FYG9"/>
<dbReference type="Proteomes" id="UP000008816">
    <property type="component" value="Chromosome"/>
</dbReference>
<dbReference type="GO" id="GO:0005829">
    <property type="term" value="C:cytosol"/>
    <property type="evidence" value="ECO:0000318"/>
    <property type="project" value="GO_Central"/>
</dbReference>
<dbReference type="GO" id="GO:0004107">
    <property type="term" value="F:chorismate synthase activity"/>
    <property type="evidence" value="ECO:0000318"/>
    <property type="project" value="GO_Central"/>
</dbReference>
<dbReference type="GO" id="GO:0010181">
    <property type="term" value="F:FMN binding"/>
    <property type="evidence" value="ECO:0000318"/>
    <property type="project" value="GO_Central"/>
</dbReference>
<dbReference type="GO" id="GO:0008652">
    <property type="term" value="P:amino acid biosynthetic process"/>
    <property type="evidence" value="ECO:0007669"/>
    <property type="project" value="UniProtKB-KW"/>
</dbReference>
<dbReference type="GO" id="GO:0009073">
    <property type="term" value="P:aromatic amino acid family biosynthetic process"/>
    <property type="evidence" value="ECO:0000318"/>
    <property type="project" value="GO_Central"/>
</dbReference>
<dbReference type="GO" id="GO:0009423">
    <property type="term" value="P:chorismate biosynthetic process"/>
    <property type="evidence" value="ECO:0000318"/>
    <property type="project" value="GO_Central"/>
</dbReference>
<dbReference type="CDD" id="cd07304">
    <property type="entry name" value="Chorismate_synthase"/>
    <property type="match status" value="1"/>
</dbReference>
<dbReference type="FunFam" id="3.60.150.10:FF:000002">
    <property type="entry name" value="Chorismate synthase"/>
    <property type="match status" value="1"/>
</dbReference>
<dbReference type="Gene3D" id="3.60.150.10">
    <property type="entry name" value="Chorismate synthase AroC"/>
    <property type="match status" value="1"/>
</dbReference>
<dbReference type="HAMAP" id="MF_00300">
    <property type="entry name" value="Chorismate_synth"/>
    <property type="match status" value="1"/>
</dbReference>
<dbReference type="InterPro" id="IPR000453">
    <property type="entry name" value="Chorismate_synth"/>
</dbReference>
<dbReference type="InterPro" id="IPR035904">
    <property type="entry name" value="Chorismate_synth_AroC_sf"/>
</dbReference>
<dbReference type="InterPro" id="IPR020541">
    <property type="entry name" value="Chorismate_synthase_CS"/>
</dbReference>
<dbReference type="NCBIfam" id="TIGR00033">
    <property type="entry name" value="aroC"/>
    <property type="match status" value="1"/>
</dbReference>
<dbReference type="NCBIfam" id="NF003793">
    <property type="entry name" value="PRK05382.1"/>
    <property type="match status" value="1"/>
</dbReference>
<dbReference type="PANTHER" id="PTHR21085">
    <property type="entry name" value="CHORISMATE SYNTHASE"/>
    <property type="match status" value="1"/>
</dbReference>
<dbReference type="PANTHER" id="PTHR21085:SF0">
    <property type="entry name" value="CHORISMATE SYNTHASE"/>
    <property type="match status" value="1"/>
</dbReference>
<dbReference type="Pfam" id="PF01264">
    <property type="entry name" value="Chorismate_synt"/>
    <property type="match status" value="1"/>
</dbReference>
<dbReference type="PIRSF" id="PIRSF001456">
    <property type="entry name" value="Chorismate_synth"/>
    <property type="match status" value="1"/>
</dbReference>
<dbReference type="SUPFAM" id="SSF103263">
    <property type="entry name" value="Chorismate synthase, AroC"/>
    <property type="match status" value="1"/>
</dbReference>
<dbReference type="PROSITE" id="PS00787">
    <property type="entry name" value="CHORISMATE_SYNTHASE_1"/>
    <property type="match status" value="1"/>
</dbReference>
<dbReference type="PROSITE" id="PS00788">
    <property type="entry name" value="CHORISMATE_SYNTHASE_2"/>
    <property type="match status" value="1"/>
</dbReference>
<dbReference type="PROSITE" id="PS00789">
    <property type="entry name" value="CHORISMATE_SYNTHASE_3"/>
    <property type="match status" value="1"/>
</dbReference>